<evidence type="ECO:0000255" key="1">
    <source>
        <dbReference type="HAMAP-Rule" id="MF_01315"/>
    </source>
</evidence>
<evidence type="ECO:0000256" key="2">
    <source>
        <dbReference type="SAM" id="MobiDB-lite"/>
    </source>
</evidence>
<evidence type="ECO:0000305" key="3"/>
<organism>
    <name type="scientific">Pseudomonas putida (strain GB-1)</name>
    <dbReference type="NCBI Taxonomy" id="76869"/>
    <lineage>
        <taxon>Bacteria</taxon>
        <taxon>Pseudomonadati</taxon>
        <taxon>Pseudomonadota</taxon>
        <taxon>Gammaproteobacteria</taxon>
        <taxon>Pseudomonadales</taxon>
        <taxon>Pseudomonadaceae</taxon>
        <taxon>Pseudomonas</taxon>
    </lineage>
</organism>
<gene>
    <name evidence="1" type="primary">rpsM</name>
    <name type="ordered locus">PputGB1_0505</name>
</gene>
<proteinExistence type="inferred from homology"/>
<keyword id="KW-0687">Ribonucleoprotein</keyword>
<keyword id="KW-0689">Ribosomal protein</keyword>
<keyword id="KW-0694">RNA-binding</keyword>
<keyword id="KW-0699">rRNA-binding</keyword>
<keyword id="KW-0820">tRNA-binding</keyword>
<feature type="chain" id="PRO_1000086252" description="Small ribosomal subunit protein uS13">
    <location>
        <begin position="1"/>
        <end position="118"/>
    </location>
</feature>
<feature type="region of interest" description="Disordered" evidence="2">
    <location>
        <begin position="92"/>
        <end position="118"/>
    </location>
</feature>
<name>RS13_PSEPG</name>
<sequence length="118" mass="13256">MARIAGVNIPDNKHTVISLTYIYGVGRTTAQKICADAGVNPAAKIKDLSDEQIETLRGEVAKFTTEGDLRRDINMKIKRLMDLGCYRGLRHRKGLPVRGQRTKTNARTRKGPRKPIRK</sequence>
<dbReference type="EMBL" id="CP000926">
    <property type="protein sequence ID" value="ABY96416.1"/>
    <property type="molecule type" value="Genomic_DNA"/>
</dbReference>
<dbReference type="RefSeq" id="WP_003255457.1">
    <property type="nucleotide sequence ID" value="NC_010322.1"/>
</dbReference>
<dbReference type="SMR" id="B0KK88"/>
<dbReference type="GeneID" id="93675544"/>
<dbReference type="KEGG" id="ppg:PputGB1_0505"/>
<dbReference type="eggNOG" id="COG0099">
    <property type="taxonomic scope" value="Bacteria"/>
</dbReference>
<dbReference type="HOGENOM" id="CLU_103849_1_2_6"/>
<dbReference type="Proteomes" id="UP000002157">
    <property type="component" value="Chromosome"/>
</dbReference>
<dbReference type="GO" id="GO:0005829">
    <property type="term" value="C:cytosol"/>
    <property type="evidence" value="ECO:0007669"/>
    <property type="project" value="TreeGrafter"/>
</dbReference>
<dbReference type="GO" id="GO:0015935">
    <property type="term" value="C:small ribosomal subunit"/>
    <property type="evidence" value="ECO:0007669"/>
    <property type="project" value="TreeGrafter"/>
</dbReference>
<dbReference type="GO" id="GO:0019843">
    <property type="term" value="F:rRNA binding"/>
    <property type="evidence" value="ECO:0007669"/>
    <property type="project" value="UniProtKB-UniRule"/>
</dbReference>
<dbReference type="GO" id="GO:0003735">
    <property type="term" value="F:structural constituent of ribosome"/>
    <property type="evidence" value="ECO:0007669"/>
    <property type="project" value="InterPro"/>
</dbReference>
<dbReference type="GO" id="GO:0000049">
    <property type="term" value="F:tRNA binding"/>
    <property type="evidence" value="ECO:0007669"/>
    <property type="project" value="UniProtKB-UniRule"/>
</dbReference>
<dbReference type="GO" id="GO:0006412">
    <property type="term" value="P:translation"/>
    <property type="evidence" value="ECO:0007669"/>
    <property type="project" value="UniProtKB-UniRule"/>
</dbReference>
<dbReference type="FunFam" id="1.10.8.50:FF:000001">
    <property type="entry name" value="30S ribosomal protein S13"/>
    <property type="match status" value="1"/>
</dbReference>
<dbReference type="FunFam" id="4.10.910.10:FF:000001">
    <property type="entry name" value="30S ribosomal protein S13"/>
    <property type="match status" value="1"/>
</dbReference>
<dbReference type="Gene3D" id="1.10.8.50">
    <property type="match status" value="1"/>
</dbReference>
<dbReference type="Gene3D" id="4.10.910.10">
    <property type="entry name" value="30s ribosomal protein s13, domain 2"/>
    <property type="match status" value="1"/>
</dbReference>
<dbReference type="HAMAP" id="MF_01315">
    <property type="entry name" value="Ribosomal_uS13"/>
    <property type="match status" value="1"/>
</dbReference>
<dbReference type="InterPro" id="IPR027437">
    <property type="entry name" value="Rbsml_uS13_C"/>
</dbReference>
<dbReference type="InterPro" id="IPR001892">
    <property type="entry name" value="Ribosomal_uS13"/>
</dbReference>
<dbReference type="InterPro" id="IPR010979">
    <property type="entry name" value="Ribosomal_uS13-like_H2TH"/>
</dbReference>
<dbReference type="InterPro" id="IPR019980">
    <property type="entry name" value="Ribosomal_uS13_bac-type"/>
</dbReference>
<dbReference type="InterPro" id="IPR018269">
    <property type="entry name" value="Ribosomal_uS13_CS"/>
</dbReference>
<dbReference type="NCBIfam" id="TIGR03631">
    <property type="entry name" value="uS13_bact"/>
    <property type="match status" value="1"/>
</dbReference>
<dbReference type="PANTHER" id="PTHR10871">
    <property type="entry name" value="30S RIBOSOMAL PROTEIN S13/40S RIBOSOMAL PROTEIN S18"/>
    <property type="match status" value="1"/>
</dbReference>
<dbReference type="PANTHER" id="PTHR10871:SF1">
    <property type="entry name" value="SMALL RIBOSOMAL SUBUNIT PROTEIN US13M"/>
    <property type="match status" value="1"/>
</dbReference>
<dbReference type="Pfam" id="PF00416">
    <property type="entry name" value="Ribosomal_S13"/>
    <property type="match status" value="1"/>
</dbReference>
<dbReference type="PIRSF" id="PIRSF002134">
    <property type="entry name" value="Ribosomal_S13"/>
    <property type="match status" value="1"/>
</dbReference>
<dbReference type="SUPFAM" id="SSF46946">
    <property type="entry name" value="S13-like H2TH domain"/>
    <property type="match status" value="1"/>
</dbReference>
<dbReference type="PROSITE" id="PS00646">
    <property type="entry name" value="RIBOSOMAL_S13_1"/>
    <property type="match status" value="1"/>
</dbReference>
<dbReference type="PROSITE" id="PS50159">
    <property type="entry name" value="RIBOSOMAL_S13_2"/>
    <property type="match status" value="1"/>
</dbReference>
<comment type="function">
    <text evidence="1">Located at the top of the head of the 30S subunit, it contacts several helices of the 16S rRNA. In the 70S ribosome it contacts the 23S rRNA (bridge B1a) and protein L5 of the 50S subunit (bridge B1b), connecting the 2 subunits; these bridges are implicated in subunit movement. Contacts the tRNAs in the A and P-sites.</text>
</comment>
<comment type="subunit">
    <text evidence="1">Part of the 30S ribosomal subunit. Forms a loose heterodimer with protein S19. Forms two bridges to the 50S subunit in the 70S ribosome.</text>
</comment>
<comment type="similarity">
    <text evidence="1">Belongs to the universal ribosomal protein uS13 family.</text>
</comment>
<protein>
    <recommendedName>
        <fullName evidence="1">Small ribosomal subunit protein uS13</fullName>
    </recommendedName>
    <alternativeName>
        <fullName evidence="3">30S ribosomal protein S13</fullName>
    </alternativeName>
</protein>
<accession>B0KK88</accession>
<reference key="1">
    <citation type="submission" date="2008-01" db="EMBL/GenBank/DDBJ databases">
        <title>Complete sequence of Pseudomonas putida GB-1.</title>
        <authorList>
            <consortium name="US DOE Joint Genome Institute"/>
            <person name="Copeland A."/>
            <person name="Lucas S."/>
            <person name="Lapidus A."/>
            <person name="Barry K."/>
            <person name="Glavina del Rio T."/>
            <person name="Dalin E."/>
            <person name="Tice H."/>
            <person name="Pitluck S."/>
            <person name="Bruce D."/>
            <person name="Goodwin L."/>
            <person name="Chertkov O."/>
            <person name="Brettin T."/>
            <person name="Detter J.C."/>
            <person name="Han C."/>
            <person name="Kuske C.R."/>
            <person name="Schmutz J."/>
            <person name="Larimer F."/>
            <person name="Land M."/>
            <person name="Hauser L."/>
            <person name="Kyrpides N."/>
            <person name="Kim E."/>
            <person name="McCarthy J.K."/>
            <person name="Richardson P."/>
        </authorList>
    </citation>
    <scope>NUCLEOTIDE SEQUENCE [LARGE SCALE GENOMIC DNA]</scope>
    <source>
        <strain>GB-1</strain>
    </source>
</reference>